<sequence>MESLETKESKVFTPVYFTSRQILLPLKMISYVSRFLKFEDFRKFIRAMWPNGEANVIFQELLERLSIRKFKAKFYNREEIEVEYKFDRERSGINWILINFKDLLPILGGIMLPDDEDKFQSIFTLEDFLKRNLKVHRCSGGIHTSCHNLGRDSDSDSEAKLDICPFDHYHHFCPDHVIAWFKHYLLTAILLREGVYDELVKNANLPNADHLTSGRRRTEQYWLRVARRKKCRFSQ</sequence>
<organismHost>
    <name type="scientific">Campoletis sonorensis</name>
    <dbReference type="NCBI Taxonomy" id="7416"/>
</organismHost>
<comment type="miscellaneous">
    <text>The genome of this virus consists of at least 28 closed circular superhelical DNA segments; three of them contain homologous DNA sequences that code for one or several tandem-repeated element proteins.</text>
</comment>
<feature type="chain" id="PRO_0000222993" description="Repeat element protein">
    <location>
        <begin position="1"/>
        <end position="235"/>
    </location>
</feature>
<feature type="region of interest" description="Repeat element">
    <location>
        <begin position="57"/>
        <end position="235"/>
    </location>
</feature>
<protein>
    <recommendedName>
        <fullName>Repeat element protein</fullName>
    </recommendedName>
</protein>
<reference key="1">
    <citation type="journal article" date="1988" name="Virology">
        <title>Identification and comparison of Campoletis sonorensis virus transcripts expressed from four genomic segments in the insect hosts Campoletis sonorensis and Heliothis virescens.</title>
        <authorList>
            <person name="Theilmann D.A."/>
            <person name="Summers M.D."/>
        </authorList>
    </citation>
    <scope>NUCLEOTIDE SEQUENCE [MRNA]</scope>
</reference>
<dbReference type="EMBL" id="M23437">
    <property type="protein sequence ID" value="AAA42923.1"/>
    <property type="molecule type" value="mRNA"/>
</dbReference>
<dbReference type="PIR" id="A31823">
    <property type="entry name" value="DNPDPW"/>
</dbReference>
<dbReference type="InterPro" id="IPR021982">
    <property type="entry name" value="REEP_Ichnovirus"/>
</dbReference>
<dbReference type="Pfam" id="PF12132">
    <property type="entry name" value="DUF3587"/>
    <property type="match status" value="1"/>
</dbReference>
<accession>P17578</accession>
<proteinExistence type="evidence at transcript level"/>
<organism>
    <name type="scientific">Campoletis sonorensis ichnovirus</name>
    <name type="common">CsIV</name>
    <dbReference type="NCBI Taxonomy" id="10484"/>
    <lineage>
        <taxon>Viruses</taxon>
        <taxon>Viruses incertae sedis</taxon>
        <taxon>Polydnaviriformidae</taxon>
        <taxon>Ichnoviriform</taxon>
    </lineage>
</organism>
<name>REEP_CSIV</name>